<comment type="function">
    <text>Core component of nucleosome. Nucleosomes wrap and compact DNA into chromatin, limiting DNA accessibility to the cellular machineries which require DNA as a template. Histones thereby play a central role in transcription regulation, DNA repair, DNA replication and chromosomal stability. DNA accessibility is regulated via a complex set of post-translational modifications of histones, also called histone code, and nucleosome remodeling.</text>
</comment>
<comment type="subunit">
    <text>The nucleosome is a histone octamer containing two molecules each of H2A, H2B, H3 and H4 assembled in one H3-H4 heterotetramer and two H2A-H2B heterodimers. The octamer wraps approximately 147 bp of DNA.</text>
</comment>
<comment type="subcellular location">
    <subcellularLocation>
        <location evidence="1">Nucleus</location>
    </subcellularLocation>
    <subcellularLocation>
        <location evidence="1">Chromosome</location>
    </subcellularLocation>
</comment>
<comment type="PTM">
    <text evidence="1">Phosphorylated to form H3S10ph. H3S10ph promotes subsequent H3K14ac formation and is required for transcriptional activation through TBP recruitment to the promoters (By similarity).</text>
</comment>
<comment type="PTM">
    <text evidence="1">Mono-, di- and trimethylated by the COMPASS complex to form H3K4me1/2/3. H3K4me activates gene expression by regulating transcription elongation and plays a role in telomere length maintenance. H3K4me enrichment correlates with transcription levels, and occurs in a 5' to 3' gradient with H3K4me3 enrichment at the 5'-end of genes, shifting to H3K4me2 and then H3K4me1. Methylated by SET2 to form H3K36me. H3K36me represses gene expression. Methylated by DOT1 to form H3K79me. H3K79me is required for association of SIR proteins with telomeric regions and for telomeric silencing. The COMPASS-mediated formation of H3K4me2/3 and the DOT1-mediated formation of H3K79me require H2BK123ub1 (By similarity).</text>
</comment>
<comment type="PTM">
    <text evidence="1">Acetylation of histone H3 leads to transcriptional activation. H3K14ac formation by GCN5 is promoted by H3S10ph. H3K14ac can also be formed by ESA1. H3K56ac formation occurs predominantly in newly synthesized H3 molecules during G1, S and G2/M of the cell cycle and may be involved in DNA repair (By similarity).</text>
</comment>
<comment type="similarity">
    <text evidence="3">Belongs to the histone H3 family.</text>
</comment>
<comment type="caution">
    <text evidence="3">To ensure consistency between histone entries, we follow the 'Brno' nomenclature for histone modifications, with positions referring to those used in the literature for the 'closest' model organism. Due to slight variations in histone sequences between organisms and to the presence of initiator methionine in UniProtKB/Swiss-Prot sequences, the actual positions of modified amino acids in the sequence generally differ. In this entry the following conventions are used: H3K4me1/2/3 = mono-, di- and trimethylated Lys-5; H3K9ac = acetylated Lys-10; H3K9me1 = monomethylated Lys-10; H3S10ph = phosphorylated Ser-11; H3K14ac = acetylated Lys-15; H3K14me2 = dimethylated Lys-15; H3K18ac = acetylated Lys-19; H3K18me1 = monomethylated Lys-19; H3K23ac = acetylated Lys-24; H3K23me1 = monomethylated Lys-24; H3K27ac = acetylated Lys-28; H3K27me1/2/3 = mono-, di- and trimethylated Lys-28; H3K36ac = acetylated Lys-37; H3K36me1/2/3 = mono-, di- and trimethylated Lys-37; H3K56ac = acetylated Lys-57; H3K64ac = acetylated Lys-65; H3K79me1/2/3 = mono-, di- and trimethylated Lys-80.</text>
</comment>
<sequence>MARTKQTARKSTGGKAPRKQLATKAARKSAPSAGGVKKPHRYRPGTVALREIRRYQKSTELLIRKLPFQRLVREIAQDFKTDLRFQSSAVMALQESAEAYLVSLFEDTNLAAIHAKRVTIQPKDIALARRLRGERT</sequence>
<protein>
    <recommendedName>
        <fullName>Histone H3.2</fullName>
    </recommendedName>
</protein>
<feature type="initiator methionine" description="Removed" evidence="1">
    <location>
        <position position="1"/>
    </location>
</feature>
<feature type="chain" id="PRO_0000270594" description="Histone H3.2">
    <location>
        <begin position="2"/>
        <end position="136"/>
    </location>
</feature>
<feature type="region of interest" description="Disordered" evidence="2">
    <location>
        <begin position="1"/>
        <end position="42"/>
    </location>
</feature>
<feature type="modified residue" description="N6,N6,N6-trimethyllysine; alternate" evidence="1">
    <location>
        <position position="5"/>
    </location>
</feature>
<feature type="modified residue" description="N6,N6-dimethyllysine; alternate" evidence="1">
    <location>
        <position position="5"/>
    </location>
</feature>
<feature type="modified residue" description="N6-methyllysine; alternate" evidence="1">
    <location>
        <position position="5"/>
    </location>
</feature>
<feature type="modified residue" description="N6-acetyllysine; alternate" evidence="1">
    <location>
        <position position="10"/>
    </location>
</feature>
<feature type="modified residue" description="N6-methyllysine; alternate" evidence="1">
    <location>
        <position position="10"/>
    </location>
</feature>
<feature type="modified residue" description="Phosphoserine" evidence="1">
    <location>
        <position position="11"/>
    </location>
</feature>
<feature type="modified residue" description="N6,N6-dimethyllysine; alternate" evidence="1">
    <location>
        <position position="15"/>
    </location>
</feature>
<feature type="modified residue" description="N6-acetyllysine; alternate" evidence="1">
    <location>
        <position position="15"/>
    </location>
</feature>
<feature type="modified residue" description="N6-acetyllysine; alternate" evidence="1">
    <location>
        <position position="19"/>
    </location>
</feature>
<feature type="modified residue" description="N6-methyllysine; alternate" evidence="1">
    <location>
        <position position="19"/>
    </location>
</feature>
<feature type="modified residue" description="N6-acetyllysine; alternate" evidence="1">
    <location>
        <position position="24"/>
    </location>
</feature>
<feature type="modified residue" description="N6-methyllysine; alternate" evidence="1">
    <location>
        <position position="24"/>
    </location>
</feature>
<feature type="modified residue" description="N6,N6,N6-trimethyllysine; alternate" evidence="1">
    <location>
        <position position="28"/>
    </location>
</feature>
<feature type="modified residue" description="N6,N6-dimethyllysine; alternate" evidence="1">
    <location>
        <position position="28"/>
    </location>
</feature>
<feature type="modified residue" description="N6-acetyllysine; alternate" evidence="1">
    <location>
        <position position="28"/>
    </location>
</feature>
<feature type="modified residue" description="N6-methyllysine; alternate" evidence="1">
    <location>
        <position position="28"/>
    </location>
</feature>
<feature type="modified residue" description="N6,N6,N6-trimethyllysine; alternate" evidence="1">
    <location>
        <position position="37"/>
    </location>
</feature>
<feature type="modified residue" description="N6,N6-dimethyllysine; alternate" evidence="1">
    <location>
        <position position="37"/>
    </location>
</feature>
<feature type="modified residue" description="N6-acetyllysine; alternate" evidence="1">
    <location>
        <position position="37"/>
    </location>
</feature>
<feature type="modified residue" description="N6-methyllysine; alternate" evidence="1">
    <location>
        <position position="37"/>
    </location>
</feature>
<feature type="modified residue" description="N6-acetyllysine" evidence="1">
    <location>
        <position position="57"/>
    </location>
</feature>
<feature type="modified residue" description="N6-acetyllysine" evidence="1">
    <location>
        <position position="65"/>
    </location>
</feature>
<feature type="modified residue" description="N6,N6,N6-trimethyllysine; alternate" evidence="1">
    <location>
        <position position="80"/>
    </location>
</feature>
<feature type="modified residue" description="N6,N6-dimethyllysine; alternate" evidence="1">
    <location>
        <position position="80"/>
    </location>
</feature>
<feature type="modified residue" description="N6-methyllysine; alternate" evidence="1">
    <location>
        <position position="80"/>
    </location>
</feature>
<name>H32_MYCMD</name>
<proteinExistence type="inferred from homology"/>
<evidence type="ECO:0000250" key="1"/>
<evidence type="ECO:0000256" key="2">
    <source>
        <dbReference type="SAM" id="MobiDB-lite"/>
    </source>
</evidence>
<evidence type="ECO:0000305" key="3"/>
<accession>Q4PB04</accession>
<accession>A0A0D1DZC5</accession>
<reference key="1">
    <citation type="journal article" date="2006" name="Nature">
        <title>Insights from the genome of the biotrophic fungal plant pathogen Ustilago maydis.</title>
        <authorList>
            <person name="Kaemper J."/>
            <person name="Kahmann R."/>
            <person name="Boelker M."/>
            <person name="Ma L.-J."/>
            <person name="Brefort T."/>
            <person name="Saville B.J."/>
            <person name="Banuett F."/>
            <person name="Kronstad J.W."/>
            <person name="Gold S.E."/>
            <person name="Mueller O."/>
            <person name="Perlin M.H."/>
            <person name="Woesten H.A.B."/>
            <person name="de Vries R."/>
            <person name="Ruiz-Herrera J."/>
            <person name="Reynaga-Pena C.G."/>
            <person name="Snetselaar K."/>
            <person name="McCann M."/>
            <person name="Perez-Martin J."/>
            <person name="Feldbruegge M."/>
            <person name="Basse C.W."/>
            <person name="Steinberg G."/>
            <person name="Ibeas J.I."/>
            <person name="Holloman W."/>
            <person name="Guzman P."/>
            <person name="Farman M.L."/>
            <person name="Stajich J.E."/>
            <person name="Sentandreu R."/>
            <person name="Gonzalez-Prieto J.M."/>
            <person name="Kennell J.C."/>
            <person name="Molina L."/>
            <person name="Schirawski J."/>
            <person name="Mendoza-Mendoza A."/>
            <person name="Greilinger D."/>
            <person name="Muench K."/>
            <person name="Roessel N."/>
            <person name="Scherer M."/>
            <person name="Vranes M."/>
            <person name="Ladendorf O."/>
            <person name="Vincon V."/>
            <person name="Fuchs U."/>
            <person name="Sandrock B."/>
            <person name="Meng S."/>
            <person name="Ho E.C.H."/>
            <person name="Cahill M.J."/>
            <person name="Boyce K.J."/>
            <person name="Klose J."/>
            <person name="Klosterman S.J."/>
            <person name="Deelstra H.J."/>
            <person name="Ortiz-Castellanos L."/>
            <person name="Li W."/>
            <person name="Sanchez-Alonso P."/>
            <person name="Schreier P.H."/>
            <person name="Haeuser-Hahn I."/>
            <person name="Vaupel M."/>
            <person name="Koopmann E."/>
            <person name="Friedrich G."/>
            <person name="Voss H."/>
            <person name="Schlueter T."/>
            <person name="Margolis J."/>
            <person name="Platt D."/>
            <person name="Swimmer C."/>
            <person name="Gnirke A."/>
            <person name="Chen F."/>
            <person name="Vysotskaia V."/>
            <person name="Mannhaupt G."/>
            <person name="Gueldener U."/>
            <person name="Muensterkoetter M."/>
            <person name="Haase D."/>
            <person name="Oesterheld M."/>
            <person name="Mewes H.-W."/>
            <person name="Mauceli E.W."/>
            <person name="DeCaprio D."/>
            <person name="Wade C.M."/>
            <person name="Butler J."/>
            <person name="Young S.K."/>
            <person name="Jaffe D.B."/>
            <person name="Calvo S.E."/>
            <person name="Nusbaum C."/>
            <person name="Galagan J.E."/>
            <person name="Birren B.W."/>
        </authorList>
    </citation>
    <scope>NUCLEOTIDE SEQUENCE [LARGE SCALE GENOMIC DNA]</scope>
    <source>
        <strain>DSM 14603 / FGSC 9021 / UM521</strain>
    </source>
</reference>
<reference key="2">
    <citation type="submission" date="2014-09" db="EMBL/GenBank/DDBJ databases">
        <authorList>
            <person name="Gueldener U."/>
            <person name="Muensterkoetter M."/>
            <person name="Walter M.C."/>
            <person name="Mannhaupt G."/>
            <person name="Kahmann R."/>
        </authorList>
    </citation>
    <scope>GENOME REANNOTATION</scope>
    <source>
        <strain>DSM 14603 / FGSC 9021 / UM521</strain>
    </source>
</reference>
<organism>
    <name type="scientific">Mycosarcoma maydis</name>
    <name type="common">Corn smut fungus</name>
    <name type="synonym">Ustilago maydis</name>
    <dbReference type="NCBI Taxonomy" id="5270"/>
    <lineage>
        <taxon>Eukaryota</taxon>
        <taxon>Fungi</taxon>
        <taxon>Dikarya</taxon>
        <taxon>Basidiomycota</taxon>
        <taxon>Ustilaginomycotina</taxon>
        <taxon>Ustilaginomycetes</taxon>
        <taxon>Ustilaginales</taxon>
        <taxon>Ustilaginaceae</taxon>
        <taxon>Mycosarcoma</taxon>
    </lineage>
</organism>
<dbReference type="EMBL" id="CM003145">
    <property type="protein sequence ID" value="KIS69374.1"/>
    <property type="molecule type" value="Genomic_DNA"/>
</dbReference>
<dbReference type="RefSeq" id="XP_011389078.1">
    <property type="nucleotide sequence ID" value="XM_011390776.1"/>
</dbReference>
<dbReference type="SMR" id="Q4PB04"/>
<dbReference type="FunCoup" id="Q4PB04">
    <property type="interactions" value="439"/>
</dbReference>
<dbReference type="STRING" id="237631.Q4PB04"/>
<dbReference type="EnsemblFungi" id="KIS69374">
    <property type="protein sequence ID" value="KIS69374"/>
    <property type="gene ID" value="UMAG_02709"/>
</dbReference>
<dbReference type="GeneID" id="23563388"/>
<dbReference type="KEGG" id="uma:UMAG_02709"/>
<dbReference type="VEuPathDB" id="FungiDB:UMAG_02709"/>
<dbReference type="eggNOG" id="KOG1745">
    <property type="taxonomic scope" value="Eukaryota"/>
</dbReference>
<dbReference type="HOGENOM" id="CLU_078295_4_0_1"/>
<dbReference type="InParanoid" id="Q4PB04"/>
<dbReference type="OMA" id="ANDCAIH"/>
<dbReference type="OrthoDB" id="842664at2759"/>
<dbReference type="Proteomes" id="UP000000561">
    <property type="component" value="Chromosome 6"/>
</dbReference>
<dbReference type="GO" id="GO:0000786">
    <property type="term" value="C:nucleosome"/>
    <property type="evidence" value="ECO:0007669"/>
    <property type="project" value="UniProtKB-KW"/>
</dbReference>
<dbReference type="GO" id="GO:0005634">
    <property type="term" value="C:nucleus"/>
    <property type="evidence" value="ECO:0000318"/>
    <property type="project" value="GO_Central"/>
</dbReference>
<dbReference type="GO" id="GO:0003677">
    <property type="term" value="F:DNA binding"/>
    <property type="evidence" value="ECO:0007669"/>
    <property type="project" value="UniProtKB-KW"/>
</dbReference>
<dbReference type="GO" id="GO:0046982">
    <property type="term" value="F:protein heterodimerization activity"/>
    <property type="evidence" value="ECO:0007669"/>
    <property type="project" value="InterPro"/>
</dbReference>
<dbReference type="GO" id="GO:0030527">
    <property type="term" value="F:structural constituent of chromatin"/>
    <property type="evidence" value="ECO:0007669"/>
    <property type="project" value="InterPro"/>
</dbReference>
<dbReference type="CDD" id="cd22911">
    <property type="entry name" value="HFD_H3"/>
    <property type="match status" value="1"/>
</dbReference>
<dbReference type="FunFam" id="1.10.20.10:FF:000001">
    <property type="entry name" value="Histone H3"/>
    <property type="match status" value="1"/>
</dbReference>
<dbReference type="Gene3D" id="1.10.20.10">
    <property type="entry name" value="Histone, subunit A"/>
    <property type="match status" value="1"/>
</dbReference>
<dbReference type="InterPro" id="IPR009072">
    <property type="entry name" value="Histone-fold"/>
</dbReference>
<dbReference type="InterPro" id="IPR007125">
    <property type="entry name" value="Histone_H2A/H2B/H3"/>
</dbReference>
<dbReference type="InterPro" id="IPR000164">
    <property type="entry name" value="Histone_H3/CENP-A"/>
</dbReference>
<dbReference type="PANTHER" id="PTHR11426">
    <property type="entry name" value="HISTONE H3"/>
    <property type="match status" value="1"/>
</dbReference>
<dbReference type="Pfam" id="PF00125">
    <property type="entry name" value="Histone"/>
    <property type="match status" value="1"/>
</dbReference>
<dbReference type="PRINTS" id="PR00622">
    <property type="entry name" value="HISTONEH3"/>
</dbReference>
<dbReference type="SMART" id="SM00428">
    <property type="entry name" value="H3"/>
    <property type="match status" value="1"/>
</dbReference>
<dbReference type="SUPFAM" id="SSF47113">
    <property type="entry name" value="Histone-fold"/>
    <property type="match status" value="1"/>
</dbReference>
<dbReference type="PROSITE" id="PS00322">
    <property type="entry name" value="HISTONE_H3_1"/>
    <property type="match status" value="1"/>
</dbReference>
<dbReference type="PROSITE" id="PS00959">
    <property type="entry name" value="HISTONE_H3_2"/>
    <property type="match status" value="1"/>
</dbReference>
<keyword id="KW-0007">Acetylation</keyword>
<keyword id="KW-0158">Chromosome</keyword>
<keyword id="KW-0238">DNA-binding</keyword>
<keyword id="KW-0488">Methylation</keyword>
<keyword id="KW-0544">Nucleosome core</keyword>
<keyword id="KW-0539">Nucleus</keyword>
<keyword id="KW-0597">Phosphoprotein</keyword>
<keyword id="KW-1185">Reference proteome</keyword>
<gene>
    <name type="primary">HHT2</name>
    <name type="ORF">UMAG_02709</name>
</gene>